<feature type="chain" id="PRO_0000180561" description="Glucose-6-phosphate isomerase, cytosolic 2A">
    <location>
        <begin position="1"/>
        <end position="569"/>
    </location>
</feature>
<feature type="active site" description="Proton donor" evidence="1">
    <location>
        <position position="360"/>
    </location>
</feature>
<feature type="active site" evidence="1">
    <location>
        <position position="391"/>
    </location>
</feature>
<feature type="active site" evidence="1">
    <location>
        <position position="516"/>
    </location>
</feature>
<sequence>MATPALISETEAWKDLKAHLEGIKRTHLRELMGDTERCQSMMVEFDNIFLDYSRQQASPDTINKLYKLAEAAHLKQKIDRMYNGDHINSTENRSVLHVALRAPRNSAICSDGKNVVPDVWNVLDKIKDFSERVRNGSWVGATGKELKDVIAVGIGGSFLGPLFVHTALQTDPEASKNARGRELRFLANVDPIDAARNISGLNPETTLVVVVSKTFTTAETMLNARTLREWISSALGVAAVAKHMVAVSTNLPLVEKFGIDPNNAFAFWDWVGGRYSVCSAVGVLPLSLQYGFAVVEKFLQGAHNIDQHFSSAPFEKNIPVLLGLLSVWNVSFLGYPARAILPYSQALEKLAPHIQQVSMESNGKGVSIDGLPLPFESGEIDFGEPGTNGQHSFYQLIHQGRVIPCDFIGVVKSQQPVYLKGEVVNNHDELMSNFFAQPDALAYGKTPEELKKENVSEHLIPHKTFTGNRPCLSILLPTLDAYRIGQLLAIYEHRVAVQGFVWGINSFDQWGVELGKSLATQVRKQLHASRVKGEPVEEGFNFSTKTLLTRYLQATTDVPADPSTLLPNI</sequence>
<keyword id="KW-0963">Cytoplasm</keyword>
<keyword id="KW-0312">Gluconeogenesis</keyword>
<keyword id="KW-0324">Glycolysis</keyword>
<keyword id="KW-0413">Isomerase</keyword>
<comment type="catalytic activity">
    <reaction>
        <text>alpha-D-glucose 6-phosphate = beta-D-fructose 6-phosphate</text>
        <dbReference type="Rhea" id="RHEA:11816"/>
        <dbReference type="ChEBI" id="CHEBI:57634"/>
        <dbReference type="ChEBI" id="CHEBI:58225"/>
        <dbReference type="EC" id="5.3.1.9"/>
    </reaction>
</comment>
<comment type="pathway">
    <text>Carbohydrate degradation; glycolysis; D-glyceraldehyde 3-phosphate and glycerone phosphate from D-glucose: step 2/4.</text>
</comment>
<comment type="subunit">
    <text evidence="1">Homodimer.</text>
</comment>
<comment type="subcellular location">
    <subcellularLocation>
        <location>Cytoplasm</location>
    </subcellularLocation>
</comment>
<comment type="similarity">
    <text evidence="2">Belongs to the GPI family.</text>
</comment>
<proteinExistence type="inferred from homology"/>
<organism>
    <name type="scientific">Clarkia lewisii</name>
    <name type="common">Farewell-to-spring</name>
    <name type="synonym">Clarkia bottae</name>
    <dbReference type="NCBI Taxonomy" id="3936"/>
    <lineage>
        <taxon>Eukaryota</taxon>
        <taxon>Viridiplantae</taxon>
        <taxon>Streptophyta</taxon>
        <taxon>Embryophyta</taxon>
        <taxon>Tracheophyta</taxon>
        <taxon>Spermatophyta</taxon>
        <taxon>Magnoliopsida</taxon>
        <taxon>eudicotyledons</taxon>
        <taxon>Gunneridae</taxon>
        <taxon>Pentapetalae</taxon>
        <taxon>rosids</taxon>
        <taxon>malvids</taxon>
        <taxon>Myrtales</taxon>
        <taxon>Onagraceae</taxon>
        <taxon>Onagroideae</taxon>
        <taxon>Onagreae</taxon>
        <taxon>Clarkia</taxon>
    </lineage>
</organism>
<accession>P29333</accession>
<protein>
    <recommendedName>
        <fullName>Glucose-6-phosphate isomerase, cytosolic 2A</fullName>
        <shortName>GPI</shortName>
        <ecNumber>5.3.1.9</ecNumber>
    </recommendedName>
    <alternativeName>
        <fullName>PGI3</fullName>
        <shortName>PGI</shortName>
    </alternativeName>
    <alternativeName>
        <fullName>Phosphoglucose isomerase</fullName>
    </alternativeName>
    <alternativeName>
        <fullName>Phosphohexose isomerase</fullName>
        <shortName>PHI</shortName>
    </alternativeName>
</protein>
<reference key="1">
    <citation type="journal article" date="1992" name="Plant Mol. Biol.">
        <title>Molecular analysis of the plant gene encoding cytosolic phosphoglucose isomerase.</title>
        <authorList>
            <person name="Thomas B.R."/>
            <person name="Laudencia-Chingcuanco D.L."/>
            <person name="Gottlieb L.D."/>
        </authorList>
    </citation>
    <scope>NUCLEOTIDE SEQUENCE [GENOMIC DNA]</scope>
</reference>
<reference key="2">
    <citation type="journal article" date="1996" name="Syst. Bot.">
        <title>Phylogenetic relationships among the sections of Clarkia (Onagraceae) inferred from the nucleotide sequences of PgiC.</title>
        <authorList>
            <person name="Gottlieb L.D."/>
            <person name="Ford V.S."/>
        </authorList>
        <dbReference type="AGRICOLA" id="IND20535960"/>
    </citation>
    <scope>NUCLEOTIDE SEQUENCE [GENOMIC DNA]</scope>
    <source>
        <strain>Population LDG 795</strain>
    </source>
</reference>
<gene>
    <name type="primary">PGIC2-A</name>
</gene>
<name>G6PI2_CLALE</name>
<dbReference type="EC" id="5.3.1.9"/>
<dbReference type="EMBL" id="X64332">
    <property type="protein sequence ID" value="CAA45616.1"/>
    <property type="molecule type" value="Genomic_DNA"/>
</dbReference>
<dbReference type="EMBL" id="X89385">
    <property type="protein sequence ID" value="CAA61565.1"/>
    <property type="molecule type" value="Genomic_DNA"/>
</dbReference>
<dbReference type="PIR" id="S23542">
    <property type="entry name" value="S23542"/>
</dbReference>
<dbReference type="SMR" id="P29333"/>
<dbReference type="UniPathway" id="UPA00109">
    <property type="reaction ID" value="UER00181"/>
</dbReference>
<dbReference type="GO" id="GO:0005829">
    <property type="term" value="C:cytosol"/>
    <property type="evidence" value="ECO:0007669"/>
    <property type="project" value="TreeGrafter"/>
</dbReference>
<dbReference type="GO" id="GO:0097367">
    <property type="term" value="F:carbohydrate derivative binding"/>
    <property type="evidence" value="ECO:0007669"/>
    <property type="project" value="InterPro"/>
</dbReference>
<dbReference type="GO" id="GO:0004347">
    <property type="term" value="F:glucose-6-phosphate isomerase activity"/>
    <property type="evidence" value="ECO:0007669"/>
    <property type="project" value="UniProtKB-EC"/>
</dbReference>
<dbReference type="GO" id="GO:0048029">
    <property type="term" value="F:monosaccharide binding"/>
    <property type="evidence" value="ECO:0007669"/>
    <property type="project" value="TreeGrafter"/>
</dbReference>
<dbReference type="GO" id="GO:0006094">
    <property type="term" value="P:gluconeogenesis"/>
    <property type="evidence" value="ECO:0007669"/>
    <property type="project" value="UniProtKB-KW"/>
</dbReference>
<dbReference type="GO" id="GO:0051156">
    <property type="term" value="P:glucose 6-phosphate metabolic process"/>
    <property type="evidence" value="ECO:0007669"/>
    <property type="project" value="TreeGrafter"/>
</dbReference>
<dbReference type="GO" id="GO:0006096">
    <property type="term" value="P:glycolytic process"/>
    <property type="evidence" value="ECO:0007669"/>
    <property type="project" value="UniProtKB-UniPathway"/>
</dbReference>
<dbReference type="CDD" id="cd05015">
    <property type="entry name" value="SIS_PGI_1"/>
    <property type="match status" value="1"/>
</dbReference>
<dbReference type="CDD" id="cd05016">
    <property type="entry name" value="SIS_PGI_2"/>
    <property type="match status" value="1"/>
</dbReference>
<dbReference type="FunFam" id="1.10.1390.10:FF:000002">
    <property type="entry name" value="Glucose-6-phosphate isomerase"/>
    <property type="match status" value="1"/>
</dbReference>
<dbReference type="FunFam" id="3.40.50.10490:FF:000018">
    <property type="entry name" value="Glucose-6-phosphate isomerase"/>
    <property type="match status" value="1"/>
</dbReference>
<dbReference type="FunFam" id="3.40.50.10490:FF:000031">
    <property type="entry name" value="Glucose-6-phosphate isomerase"/>
    <property type="match status" value="1"/>
</dbReference>
<dbReference type="FunFam" id="3.40.50.10490:FF:000048">
    <property type="entry name" value="Glucose-6-phosphate isomerase"/>
    <property type="match status" value="1"/>
</dbReference>
<dbReference type="Gene3D" id="1.10.1390.10">
    <property type="match status" value="1"/>
</dbReference>
<dbReference type="Gene3D" id="3.40.50.10490">
    <property type="entry name" value="Glucose-6-phosphate isomerase like protein, domain 1"/>
    <property type="match status" value="2"/>
</dbReference>
<dbReference type="HAMAP" id="MF_00473">
    <property type="entry name" value="G6P_isomerase"/>
    <property type="match status" value="1"/>
</dbReference>
<dbReference type="InterPro" id="IPR001672">
    <property type="entry name" value="G6P_Isomerase"/>
</dbReference>
<dbReference type="InterPro" id="IPR023096">
    <property type="entry name" value="G6P_Isomerase_C"/>
</dbReference>
<dbReference type="InterPro" id="IPR018189">
    <property type="entry name" value="Phosphoglucose_isomerase_CS"/>
</dbReference>
<dbReference type="InterPro" id="IPR046348">
    <property type="entry name" value="SIS_dom_sf"/>
</dbReference>
<dbReference type="InterPro" id="IPR035476">
    <property type="entry name" value="SIS_PGI_1"/>
</dbReference>
<dbReference type="InterPro" id="IPR035482">
    <property type="entry name" value="SIS_PGI_2"/>
</dbReference>
<dbReference type="NCBIfam" id="NF001211">
    <property type="entry name" value="PRK00179.1"/>
    <property type="match status" value="1"/>
</dbReference>
<dbReference type="PANTHER" id="PTHR11469">
    <property type="entry name" value="GLUCOSE-6-PHOSPHATE ISOMERASE"/>
    <property type="match status" value="1"/>
</dbReference>
<dbReference type="PANTHER" id="PTHR11469:SF1">
    <property type="entry name" value="GLUCOSE-6-PHOSPHATE ISOMERASE"/>
    <property type="match status" value="1"/>
</dbReference>
<dbReference type="Pfam" id="PF00342">
    <property type="entry name" value="PGI"/>
    <property type="match status" value="1"/>
</dbReference>
<dbReference type="PRINTS" id="PR00662">
    <property type="entry name" value="G6PISOMERASE"/>
</dbReference>
<dbReference type="SUPFAM" id="SSF53697">
    <property type="entry name" value="SIS domain"/>
    <property type="match status" value="1"/>
</dbReference>
<dbReference type="PROSITE" id="PS00765">
    <property type="entry name" value="P_GLUCOSE_ISOMERASE_1"/>
    <property type="match status" value="1"/>
</dbReference>
<dbReference type="PROSITE" id="PS00174">
    <property type="entry name" value="P_GLUCOSE_ISOMERASE_2"/>
    <property type="match status" value="1"/>
</dbReference>
<dbReference type="PROSITE" id="PS51463">
    <property type="entry name" value="P_GLUCOSE_ISOMERASE_3"/>
    <property type="match status" value="1"/>
</dbReference>
<evidence type="ECO:0000250" key="1"/>
<evidence type="ECO:0000305" key="2"/>